<comment type="similarity">
    <text evidence="2">Belongs to the serpin family.</text>
</comment>
<comment type="sequence caution" evidence="2">
    <conflict type="frameshift">
        <sequence resource="EMBL-CDS" id="AAM05993"/>
    </conflict>
    <text>Produces two ORFs.</text>
</comment>
<comment type="sequence caution" evidence="2">
    <conflict type="frameshift">
        <sequence resource="EMBL-CDS" id="AAM05994"/>
    </conflict>
    <text>Produces two ORFs.</text>
</comment>
<proteinExistence type="inferred from homology"/>
<name>Y2613_METAC</name>
<dbReference type="EMBL" id="AE010299">
    <property type="protein sequence ID" value="AAM05994.1"/>
    <property type="status" value="ALT_FRAME"/>
    <property type="molecule type" value="Genomic_DNA"/>
</dbReference>
<dbReference type="EMBL" id="AE010299">
    <property type="protein sequence ID" value="AAM05993.1"/>
    <property type="status" value="ALT_FRAME"/>
    <property type="molecule type" value="Genomic_DNA"/>
</dbReference>
<dbReference type="SMR" id="Q8TMP0"/>
<dbReference type="STRING" id="188937.MA_2613"/>
<dbReference type="EnsemblBacteria" id="AAM05993">
    <property type="protein sequence ID" value="AAM05993"/>
    <property type="gene ID" value="MA_2612"/>
</dbReference>
<dbReference type="EnsemblBacteria" id="AAM05994">
    <property type="protein sequence ID" value="AAM05994"/>
    <property type="gene ID" value="MA_2613"/>
</dbReference>
<dbReference type="KEGG" id="mac:MA_2612"/>
<dbReference type="KEGG" id="mac:MA_2613"/>
<dbReference type="HOGENOM" id="CLU_2597669_0_0_2"/>
<dbReference type="InParanoid" id="Q8TMP0"/>
<dbReference type="PhylomeDB" id="Q8TMP0"/>
<dbReference type="Proteomes" id="UP000002487">
    <property type="component" value="Chromosome"/>
</dbReference>
<dbReference type="GO" id="GO:0005615">
    <property type="term" value="C:extracellular space"/>
    <property type="evidence" value="ECO:0000318"/>
    <property type="project" value="GO_Central"/>
</dbReference>
<dbReference type="GO" id="GO:0004867">
    <property type="term" value="F:serine-type endopeptidase inhibitor activity"/>
    <property type="evidence" value="ECO:0007669"/>
    <property type="project" value="UniProtKB-KW"/>
</dbReference>
<dbReference type="CDD" id="cd19591">
    <property type="entry name" value="serpin_like"/>
    <property type="match status" value="1"/>
</dbReference>
<dbReference type="Gene3D" id="2.30.39.10">
    <property type="entry name" value="Alpha-1-antitrypsin, domain 1"/>
    <property type="match status" value="1"/>
</dbReference>
<dbReference type="Gene3D" id="3.30.497.10">
    <property type="entry name" value="Antithrombin, subunit I, domain 2"/>
    <property type="match status" value="1"/>
</dbReference>
<dbReference type="InterPro" id="IPR023796">
    <property type="entry name" value="Serpin_dom"/>
</dbReference>
<dbReference type="InterPro" id="IPR000215">
    <property type="entry name" value="Serpin_fam"/>
</dbReference>
<dbReference type="InterPro" id="IPR036186">
    <property type="entry name" value="Serpin_sf"/>
</dbReference>
<dbReference type="InterPro" id="IPR042178">
    <property type="entry name" value="Serpin_sf_1"/>
</dbReference>
<dbReference type="InterPro" id="IPR042185">
    <property type="entry name" value="Serpin_sf_2"/>
</dbReference>
<dbReference type="PANTHER" id="PTHR11461:SF211">
    <property type="entry name" value="GH10112P-RELATED"/>
    <property type="match status" value="1"/>
</dbReference>
<dbReference type="PANTHER" id="PTHR11461">
    <property type="entry name" value="SERINE PROTEASE INHIBITOR, SERPIN"/>
    <property type="match status" value="1"/>
</dbReference>
<dbReference type="Pfam" id="PF00079">
    <property type="entry name" value="Serpin"/>
    <property type="match status" value="1"/>
</dbReference>
<dbReference type="SMART" id="SM00093">
    <property type="entry name" value="SERPIN"/>
    <property type="match status" value="1"/>
</dbReference>
<dbReference type="SUPFAM" id="SSF56574">
    <property type="entry name" value="Serpins"/>
    <property type="match status" value="1"/>
</dbReference>
<gene>
    <name type="ordered locus">MA_2613/MA_2612</name>
</gene>
<protein>
    <recommendedName>
        <fullName>Uncharacterized serpin-like protein MA_2613/MA_2612</fullName>
    </recommendedName>
</protein>
<reference key="1">
    <citation type="journal article" date="2002" name="Genome Res.">
        <title>The genome of Methanosarcina acetivorans reveals extensive metabolic and physiological diversity.</title>
        <authorList>
            <person name="Galagan J.E."/>
            <person name="Nusbaum C."/>
            <person name="Roy A."/>
            <person name="Endrizzi M.G."/>
            <person name="Macdonald P."/>
            <person name="FitzHugh W."/>
            <person name="Calvo S."/>
            <person name="Engels R."/>
            <person name="Smirnov S."/>
            <person name="Atnoor D."/>
            <person name="Brown A."/>
            <person name="Allen N."/>
            <person name="Naylor J."/>
            <person name="Stange-Thomann N."/>
            <person name="DeArellano K."/>
            <person name="Johnson R."/>
            <person name="Linton L."/>
            <person name="McEwan P."/>
            <person name="McKernan K."/>
            <person name="Talamas J."/>
            <person name="Tirrell A."/>
            <person name="Ye W."/>
            <person name="Zimmer A."/>
            <person name="Barber R.D."/>
            <person name="Cann I."/>
            <person name="Graham D.E."/>
            <person name="Grahame D.A."/>
            <person name="Guss A.M."/>
            <person name="Hedderich R."/>
            <person name="Ingram-Smith C."/>
            <person name="Kuettner H.C."/>
            <person name="Krzycki J.A."/>
            <person name="Leigh J.A."/>
            <person name="Li W."/>
            <person name="Liu J."/>
            <person name="Mukhopadhyay B."/>
            <person name="Reeve J.N."/>
            <person name="Smith K."/>
            <person name="Springer T.A."/>
            <person name="Umayam L.A."/>
            <person name="White O."/>
            <person name="White R.H."/>
            <person name="de Macario E.C."/>
            <person name="Ferry J.G."/>
            <person name="Jarrell K.F."/>
            <person name="Jing H."/>
            <person name="Macario A.J.L."/>
            <person name="Paulsen I.T."/>
            <person name="Pritchett M."/>
            <person name="Sowers K.R."/>
            <person name="Swanson R.V."/>
            <person name="Zinder S.H."/>
            <person name="Lander E."/>
            <person name="Metcalf W.W."/>
            <person name="Birren B."/>
        </authorList>
    </citation>
    <scope>NUCLEOTIDE SEQUENCE [LARGE SCALE GENOMIC DNA]</scope>
    <source>
        <strain>ATCC 35395 / DSM 2834 / JCM 12185 / C2A</strain>
    </source>
</reference>
<organism>
    <name type="scientific">Methanosarcina acetivorans (strain ATCC 35395 / DSM 2834 / JCM 12185 / C2A)</name>
    <dbReference type="NCBI Taxonomy" id="188937"/>
    <lineage>
        <taxon>Archaea</taxon>
        <taxon>Methanobacteriati</taxon>
        <taxon>Methanobacteriota</taxon>
        <taxon>Stenosarchaea group</taxon>
        <taxon>Methanomicrobia</taxon>
        <taxon>Methanosarcinales</taxon>
        <taxon>Methanosarcinaceae</taxon>
        <taxon>Methanosarcina</taxon>
    </lineage>
</organism>
<accession>Q8TMP0</accession>
<accession>Q8TMP1</accession>
<feature type="chain" id="PRO_0000094161" description="Uncharacterized serpin-like protein MA_2613/MA_2612">
    <location>
        <begin position="1"/>
        <end position="424"/>
    </location>
</feature>
<feature type="site" description="Reactive bond" evidence="1">
    <location>
        <begin position="372"/>
        <end position="373"/>
    </location>
</feature>
<sequence>MKTLLIFTLTLLCSGCLEDTAVTPINTINPDSVEYYGVAAANNAFAFDMYSKLVQLESREKNNILFSPYSVSAAMAICYEGTEGTAKEQISNVFYFPANNTVFKVRLKETNDKVYSGSDGYELENANAIWVQEEYPVKEEYIFNVKNYYRSEVTNLDFVEKPDESRDAINEWVEDKTDRKIKDIVPKGSITDDTRLILTNAIYFNGKWEHEFDKKMTSKKTFYPTKREEVSVDMMYISSNFNYSENLKAKIIELPYKGNDLSMYIVLPKGNNITEFENNFTVNEYTELKYNMESLGDVETSIPKFKFETKTELSDSLIEMGVADAFDLKLANFSGISEIRLLISRMIHQDFIDVQEEVTEAAASTTVFIGSVSSSKSKSREFKADLPFIFFIEDRRTDCILFMGKVEYPEYEGTGRFWSLPWNK</sequence>
<keyword id="KW-0646">Protease inhibitor</keyword>
<keyword id="KW-1185">Reference proteome</keyword>
<keyword id="KW-0722">Serine protease inhibitor</keyword>
<evidence type="ECO:0000255" key="1"/>
<evidence type="ECO:0000305" key="2"/>